<organism>
    <name type="scientific">Emericella nidulans (strain FGSC A4 / ATCC 38163 / CBS 112.46 / NRRL 194 / M139)</name>
    <name type="common">Aspergillus nidulans</name>
    <dbReference type="NCBI Taxonomy" id="227321"/>
    <lineage>
        <taxon>Eukaryota</taxon>
        <taxon>Fungi</taxon>
        <taxon>Dikarya</taxon>
        <taxon>Ascomycota</taxon>
        <taxon>Pezizomycotina</taxon>
        <taxon>Eurotiomycetes</taxon>
        <taxon>Eurotiomycetidae</taxon>
        <taxon>Eurotiales</taxon>
        <taxon>Aspergillaceae</taxon>
        <taxon>Aspergillus</taxon>
        <taxon>Aspergillus subgen. Nidulantes</taxon>
    </lineage>
</organism>
<evidence type="ECO:0000255" key="1">
    <source>
        <dbReference type="HAMAP-Rule" id="MF_03216"/>
    </source>
</evidence>
<evidence type="ECO:0000303" key="2">
    <source>
    </source>
</evidence>
<evidence type="ECO:0000305" key="3"/>
<evidence type="ECO:0000305" key="4">
    <source>
    </source>
</evidence>
<reference key="1">
    <citation type="journal article" date="2005" name="Nature">
        <title>Sequencing of Aspergillus nidulans and comparative analysis with A. fumigatus and A. oryzae.</title>
        <authorList>
            <person name="Galagan J.E."/>
            <person name="Calvo S.E."/>
            <person name="Cuomo C."/>
            <person name="Ma L.-J."/>
            <person name="Wortman J.R."/>
            <person name="Batzoglou S."/>
            <person name="Lee S.-I."/>
            <person name="Bastuerkmen M."/>
            <person name="Spevak C.C."/>
            <person name="Clutterbuck J."/>
            <person name="Kapitonov V."/>
            <person name="Jurka J."/>
            <person name="Scazzocchio C."/>
            <person name="Farman M.L."/>
            <person name="Butler J."/>
            <person name="Purcell S."/>
            <person name="Harris S."/>
            <person name="Braus G.H."/>
            <person name="Draht O."/>
            <person name="Busch S."/>
            <person name="D'Enfert C."/>
            <person name="Bouchier C."/>
            <person name="Goldman G.H."/>
            <person name="Bell-Pedersen D."/>
            <person name="Griffiths-Jones S."/>
            <person name="Doonan J.H."/>
            <person name="Yu J."/>
            <person name="Vienken K."/>
            <person name="Pain A."/>
            <person name="Freitag M."/>
            <person name="Selker E.U."/>
            <person name="Archer D.B."/>
            <person name="Penalva M.A."/>
            <person name="Oakley B.R."/>
            <person name="Momany M."/>
            <person name="Tanaka T."/>
            <person name="Kumagai T."/>
            <person name="Asai K."/>
            <person name="Machida M."/>
            <person name="Nierman W.C."/>
            <person name="Denning D.W."/>
            <person name="Caddick M.X."/>
            <person name="Hynes M."/>
            <person name="Paoletti M."/>
            <person name="Fischer R."/>
            <person name="Miller B.L."/>
            <person name="Dyer P.S."/>
            <person name="Sachs M.S."/>
            <person name="Osmani S.A."/>
            <person name="Birren B.W."/>
        </authorList>
    </citation>
    <scope>NUCLEOTIDE SEQUENCE [LARGE SCALE GENOMIC DNA]</scope>
    <source>
        <strain>FGSC A4 / ATCC 38163 / CBS 112.46 / NRRL 194 / M139</strain>
    </source>
</reference>
<reference key="2">
    <citation type="journal article" date="2009" name="Fungal Genet. Biol.">
        <title>The 2008 update of the Aspergillus nidulans genome annotation: a community effort.</title>
        <authorList>
            <person name="Wortman J.R."/>
            <person name="Gilsenan J.M."/>
            <person name="Joardar V."/>
            <person name="Deegan J."/>
            <person name="Clutterbuck J."/>
            <person name="Andersen M.R."/>
            <person name="Archer D."/>
            <person name="Bencina M."/>
            <person name="Braus G."/>
            <person name="Coutinho P."/>
            <person name="von Dohren H."/>
            <person name="Doonan J."/>
            <person name="Driessen A.J."/>
            <person name="Durek P."/>
            <person name="Espeso E."/>
            <person name="Fekete E."/>
            <person name="Flipphi M."/>
            <person name="Estrada C.G."/>
            <person name="Geysens S."/>
            <person name="Goldman G."/>
            <person name="de Groot P.W."/>
            <person name="Hansen K."/>
            <person name="Harris S.D."/>
            <person name="Heinekamp T."/>
            <person name="Helmstaedt K."/>
            <person name="Henrissat B."/>
            <person name="Hofmann G."/>
            <person name="Homan T."/>
            <person name="Horio T."/>
            <person name="Horiuchi H."/>
            <person name="James S."/>
            <person name="Jones M."/>
            <person name="Karaffa L."/>
            <person name="Karanyi Z."/>
            <person name="Kato M."/>
            <person name="Keller N."/>
            <person name="Kelly D.E."/>
            <person name="Kiel J.A."/>
            <person name="Kim J.M."/>
            <person name="van der Klei I.J."/>
            <person name="Klis F.M."/>
            <person name="Kovalchuk A."/>
            <person name="Krasevec N."/>
            <person name="Kubicek C.P."/>
            <person name="Liu B."/>
            <person name="Maccabe A."/>
            <person name="Meyer V."/>
            <person name="Mirabito P."/>
            <person name="Miskei M."/>
            <person name="Mos M."/>
            <person name="Mullins J."/>
            <person name="Nelson D.R."/>
            <person name="Nielsen J."/>
            <person name="Oakley B.R."/>
            <person name="Osmani S.A."/>
            <person name="Pakula T."/>
            <person name="Paszewski A."/>
            <person name="Paulsen I."/>
            <person name="Pilsyk S."/>
            <person name="Pocsi I."/>
            <person name="Punt P.J."/>
            <person name="Ram A.F."/>
            <person name="Ren Q."/>
            <person name="Robellet X."/>
            <person name="Robson G."/>
            <person name="Seiboth B."/>
            <person name="van Solingen P."/>
            <person name="Specht T."/>
            <person name="Sun J."/>
            <person name="Taheri-Talesh N."/>
            <person name="Takeshita N."/>
            <person name="Ussery D."/>
            <person name="vanKuyk P.A."/>
            <person name="Visser H."/>
            <person name="van de Vondervoort P.J."/>
            <person name="de Vries R.P."/>
            <person name="Walton J."/>
            <person name="Xiang X."/>
            <person name="Xiong Y."/>
            <person name="Zeng A.P."/>
            <person name="Brandt B.W."/>
            <person name="Cornell M.J."/>
            <person name="van den Hondel C.A."/>
            <person name="Visser J."/>
            <person name="Oliver S.G."/>
            <person name="Turner G."/>
        </authorList>
    </citation>
    <scope>GENOME REANNOTATION</scope>
    <source>
        <strain>FGSC A4 / ATCC 38163 / CBS 112.46 / NRRL 194 / M139</strain>
    </source>
</reference>
<reference key="3">
    <citation type="journal article" date="1978" name="Genet. Res.">
        <title>Characterization of a new choline locus in Aspergillus nidulans and its significance for choline metabolism.</title>
        <authorList>
            <person name="Markham P."/>
            <person name="Bainbridge B.W."/>
        </authorList>
    </citation>
    <scope>FUNCTION</scope>
    <scope>PATHWAY</scope>
</reference>
<protein>
    <recommendedName>
        <fullName evidence="1">Phosphatidyl-N-methylethanolamine N-methyltransferase</fullName>
        <ecNumber evidence="1">2.1.1.71</ecNumber>
    </recommendedName>
    <alternativeName>
        <fullName evidence="1">Phospholipid methyltransferase</fullName>
        <shortName evidence="1">PLMT</shortName>
    </alternativeName>
</protein>
<comment type="function">
    <text evidence="1 4">Catalyzes the second two steps of the methylation pathway of phosphatidylcholine biosynthesis, the SAM-dependent methylation of phosphatidylmonomethylethanolamine (PMME) to phosphatidyldimethylethanolamine (PDME) and of PDME to phosphatidylcholine (PC).</text>
</comment>
<comment type="catalytic activity">
    <reaction evidence="1">
        <text>a 1,2-diacyl-sn-glycero-3-phospho-N-methylethanolamine + S-adenosyl-L-methionine = a 1,2-diacyl-sn-glycero-3-phospho-N,N-dimethylethanolamine + S-adenosyl-L-homocysteine + H(+)</text>
        <dbReference type="Rhea" id="RHEA:32735"/>
        <dbReference type="ChEBI" id="CHEBI:15378"/>
        <dbReference type="ChEBI" id="CHEBI:57856"/>
        <dbReference type="ChEBI" id="CHEBI:59789"/>
        <dbReference type="ChEBI" id="CHEBI:64572"/>
        <dbReference type="ChEBI" id="CHEBI:64573"/>
        <dbReference type="EC" id="2.1.1.71"/>
    </reaction>
</comment>
<comment type="catalytic activity">
    <reaction evidence="1">
        <text>a 1,2-diacyl-sn-glycero-3-phospho-N,N-dimethylethanolamine + S-adenosyl-L-methionine = a 1,2-diacyl-sn-glycero-3-phosphocholine + S-adenosyl-L-homocysteine + H(+)</text>
        <dbReference type="Rhea" id="RHEA:32739"/>
        <dbReference type="ChEBI" id="CHEBI:15378"/>
        <dbReference type="ChEBI" id="CHEBI:57643"/>
        <dbReference type="ChEBI" id="CHEBI:57856"/>
        <dbReference type="ChEBI" id="CHEBI:59789"/>
        <dbReference type="ChEBI" id="CHEBI:64572"/>
        <dbReference type="EC" id="2.1.1.71"/>
    </reaction>
</comment>
<comment type="pathway">
    <text evidence="1 4">Phospholipid metabolism; phosphatidylcholine biosynthesis.</text>
</comment>
<comment type="subcellular location">
    <subcellularLocation>
        <location evidence="1">Endoplasmic reticulum membrane</location>
        <topology evidence="1">Multi-pass membrane protein</topology>
    </subcellularLocation>
    <subcellularLocation>
        <location evidence="1">Mitochondrion membrane</location>
        <topology evidence="1">Multi-pass membrane protein</topology>
    </subcellularLocation>
</comment>
<comment type="similarity">
    <text evidence="1">Belongs to the class VI-like SAM-binding methyltransferase superfamily. PEMT/PEM2 methyltransferase family.</text>
</comment>
<comment type="sequence caution" evidence="3">
    <conflict type="erroneous gene model prediction">
        <sequence resource="EMBL-CDS" id="EAA65206"/>
    </conflict>
</comment>
<keyword id="KW-0256">Endoplasmic reticulum</keyword>
<keyword id="KW-0444">Lipid biosynthesis</keyword>
<keyword id="KW-0443">Lipid metabolism</keyword>
<keyword id="KW-0472">Membrane</keyword>
<keyword id="KW-0489">Methyltransferase</keyword>
<keyword id="KW-0496">Mitochondrion</keyword>
<keyword id="KW-0594">Phospholipid biosynthesis</keyword>
<keyword id="KW-1208">Phospholipid metabolism</keyword>
<keyword id="KW-1185">Reference proteome</keyword>
<keyword id="KW-0949">S-adenosyl-L-methionine</keyword>
<keyword id="KW-0808">Transferase</keyword>
<keyword id="KW-0812">Transmembrane</keyword>
<keyword id="KW-1133">Transmembrane helix</keyword>
<feature type="chain" id="PRO_0000437449" description="Phosphatidyl-N-methylethanolamine N-methyltransferase">
    <location>
        <begin position="1"/>
        <end position="202"/>
    </location>
</feature>
<feature type="topological domain" description="Lumenal" evidence="1">
    <location>
        <begin position="1"/>
        <end position="12"/>
    </location>
</feature>
<feature type="intramembrane region" description="Helical" evidence="1">
    <location>
        <begin position="13"/>
        <end position="33"/>
    </location>
</feature>
<feature type="topological domain" description="Lumenal" evidence="1">
    <location>
        <begin position="34"/>
        <end position="45"/>
    </location>
</feature>
<feature type="transmembrane region" description="Helical" evidence="1">
    <location>
        <begin position="46"/>
        <end position="66"/>
    </location>
</feature>
<feature type="topological domain" description="Cytoplasmic" evidence="1">
    <location>
        <begin position="67"/>
        <end position="90"/>
    </location>
</feature>
<feature type="transmembrane region" description="Helical" evidence="1">
    <location>
        <begin position="91"/>
        <end position="111"/>
    </location>
</feature>
<feature type="topological domain" description="Lumenal" evidence="1">
    <location>
        <begin position="112"/>
        <end position="154"/>
    </location>
</feature>
<feature type="transmembrane region" description="Helical" evidence="1">
    <location>
        <begin position="155"/>
        <end position="175"/>
    </location>
</feature>
<feature type="topological domain" description="Cytoplasmic" evidence="1">
    <location>
        <begin position="176"/>
        <end position="202"/>
    </location>
</feature>
<feature type="binding site" evidence="1">
    <location>
        <begin position="95"/>
        <end position="97"/>
    </location>
    <ligand>
        <name>S-adenosyl-L-methionine</name>
        <dbReference type="ChEBI" id="CHEBI:59789"/>
    </ligand>
</feature>
<feature type="binding site" evidence="1">
    <location>
        <begin position="177"/>
        <end position="178"/>
    </location>
    <ligand>
        <name>S-adenosyl-L-methionine</name>
        <dbReference type="ChEBI" id="CHEBI:59789"/>
    </ligand>
</feature>
<dbReference type="EC" id="2.1.1.71" evidence="1"/>
<dbReference type="EMBL" id="AACD01000019">
    <property type="protein sequence ID" value="EAA65206.1"/>
    <property type="status" value="ALT_SEQ"/>
    <property type="molecule type" value="Genomic_DNA"/>
</dbReference>
<dbReference type="EMBL" id="BN001308">
    <property type="protein sequence ID" value="CBF87617.1"/>
    <property type="molecule type" value="Genomic_DNA"/>
</dbReference>
<dbReference type="RefSeq" id="XP_658980.1">
    <property type="nucleotide sequence ID" value="XM_653888.1"/>
</dbReference>
<dbReference type="FunCoup" id="C8VRV0">
    <property type="interactions" value="53"/>
</dbReference>
<dbReference type="STRING" id="227321.C8VRV0"/>
<dbReference type="EnsemblFungi" id="CBF87617">
    <property type="protein sequence ID" value="CBF87617"/>
    <property type="gene ID" value="ANIA_01376"/>
</dbReference>
<dbReference type="VEuPathDB" id="FungiDB:AN1376"/>
<dbReference type="eggNOG" id="KOG4142">
    <property type="taxonomic scope" value="Eukaryota"/>
</dbReference>
<dbReference type="HOGENOM" id="CLU_086119_0_0_1"/>
<dbReference type="InParanoid" id="C8VRV0"/>
<dbReference type="OMA" id="PTFWNIA"/>
<dbReference type="OrthoDB" id="8300106at2759"/>
<dbReference type="UniPathway" id="UPA00753"/>
<dbReference type="Proteomes" id="UP000000560">
    <property type="component" value="Chromosome VIII"/>
</dbReference>
<dbReference type="GO" id="GO:0005789">
    <property type="term" value="C:endoplasmic reticulum membrane"/>
    <property type="evidence" value="ECO:0007669"/>
    <property type="project" value="UniProtKB-SubCell"/>
</dbReference>
<dbReference type="GO" id="GO:0031966">
    <property type="term" value="C:mitochondrial membrane"/>
    <property type="evidence" value="ECO:0007669"/>
    <property type="project" value="UniProtKB-SubCell"/>
</dbReference>
<dbReference type="GO" id="GO:0000773">
    <property type="term" value="F:phosphatidyl-N-methylethanolamine N-methyltransferase activity"/>
    <property type="evidence" value="ECO:0007669"/>
    <property type="project" value="UniProtKB-UniRule"/>
</dbReference>
<dbReference type="GO" id="GO:0070791">
    <property type="term" value="P:cleistothecium development"/>
    <property type="evidence" value="ECO:0000315"/>
    <property type="project" value="AspGD"/>
</dbReference>
<dbReference type="GO" id="GO:0032259">
    <property type="term" value="P:methylation"/>
    <property type="evidence" value="ECO:0007669"/>
    <property type="project" value="UniProtKB-KW"/>
</dbReference>
<dbReference type="GO" id="GO:0006656">
    <property type="term" value="P:phosphatidylcholine biosynthetic process"/>
    <property type="evidence" value="ECO:0000315"/>
    <property type="project" value="AspGD"/>
</dbReference>
<dbReference type="FunFam" id="1.20.120.1630:FF:000005">
    <property type="entry name" value="Phosphatidylethanolamine N-methyltransferase"/>
    <property type="match status" value="1"/>
</dbReference>
<dbReference type="Gene3D" id="1.20.120.1630">
    <property type="match status" value="1"/>
</dbReference>
<dbReference type="HAMAP" id="MF_03216">
    <property type="entry name" value="PLMT"/>
    <property type="match status" value="1"/>
</dbReference>
<dbReference type="InterPro" id="IPR024960">
    <property type="entry name" value="PEMT/MFAP"/>
</dbReference>
<dbReference type="InterPro" id="IPR007318">
    <property type="entry name" value="Phopholipid_MeTrfase"/>
</dbReference>
<dbReference type="PANTHER" id="PTHR15458">
    <property type="entry name" value="PHOSPHATIDYLETHANOLAMINE N-METHYLTRANSFERASE"/>
    <property type="match status" value="1"/>
</dbReference>
<dbReference type="PANTHER" id="PTHR15458:SF5">
    <property type="entry name" value="PHOSPHATIDYLETHANOLAMINE N-METHYLTRANSFERASE"/>
    <property type="match status" value="1"/>
</dbReference>
<dbReference type="Pfam" id="PF04191">
    <property type="entry name" value="PEMT"/>
    <property type="match status" value="1"/>
</dbReference>
<dbReference type="PIRSF" id="PIRSF005444">
    <property type="entry name" value="PEMT"/>
    <property type="match status" value="1"/>
</dbReference>
<dbReference type="PROSITE" id="PS50244">
    <property type="entry name" value="S5A_REDUCTASE"/>
    <property type="match status" value="1"/>
</dbReference>
<dbReference type="PROSITE" id="PS51599">
    <property type="entry name" value="SAM_PEMT_PEM2"/>
    <property type="match status" value="1"/>
</dbReference>
<sequence length="202" mass="22674">MTTLSDYVDFSQDSFKYAALSIAFNPIFWNVVARAEYRSHFLTRIFGSPYRGCYFLAITIFSLGILRDHIYQQALEDQPYYAPVHQPVLGGALFAVGSVLVLSSMYALGVTGTYLGDYFGILMDAPVTGFPFNVTGSPMYWGSTLNFLGVALYKGKVAGILLTALVFVLYWFALKWEDPFTAEIYAKRERERAKSKRGGKNQ</sequence>
<gene>
    <name evidence="2" type="primary">choC</name>
    <name type="ORF">AN1376</name>
    <name type="ORF">ANIA_01376</name>
</gene>
<name>PLMT_EMENI</name>
<proteinExistence type="inferred from homology"/>
<accession>C8VRV0</accession>
<accession>Q5BDK4</accession>